<organism>
    <name type="scientific">Homo sapiens</name>
    <name type="common">Human</name>
    <dbReference type="NCBI Taxonomy" id="9606"/>
    <lineage>
        <taxon>Eukaryota</taxon>
        <taxon>Metazoa</taxon>
        <taxon>Chordata</taxon>
        <taxon>Craniata</taxon>
        <taxon>Vertebrata</taxon>
        <taxon>Euteleostomi</taxon>
        <taxon>Mammalia</taxon>
        <taxon>Eutheria</taxon>
        <taxon>Euarchontoglires</taxon>
        <taxon>Primates</taxon>
        <taxon>Haplorrhini</taxon>
        <taxon>Catarrhini</taxon>
        <taxon>Hominidae</taxon>
        <taxon>Homo</taxon>
    </lineage>
</organism>
<proteinExistence type="inferred from homology"/>
<accession>Q8NGX2</accession>
<accession>Q6IEY7</accession>
<protein>
    <recommendedName>
        <fullName>Olfactory receptor 2T35</fullName>
    </recommendedName>
    <alternativeName>
        <fullName>Olfactory receptor OR1-66</fullName>
    </alternativeName>
</protein>
<gene>
    <name type="primary">OR2T35</name>
</gene>
<evidence type="ECO:0000255" key="1"/>
<evidence type="ECO:0000255" key="2">
    <source>
        <dbReference type="PROSITE-ProRule" id="PRU00521"/>
    </source>
</evidence>
<evidence type="ECO:0000305" key="3"/>
<feature type="chain" id="PRO_0000150509" description="Olfactory receptor 2T35">
    <location>
        <begin position="1"/>
        <end position="323"/>
    </location>
</feature>
<feature type="topological domain" description="Extracellular" evidence="1">
    <location>
        <begin position="1"/>
        <end position="26"/>
    </location>
</feature>
<feature type="transmembrane region" description="Helical; Name=1" evidence="1">
    <location>
        <begin position="27"/>
        <end position="50"/>
    </location>
</feature>
<feature type="topological domain" description="Cytoplasmic" evidence="1">
    <location>
        <begin position="51"/>
        <end position="58"/>
    </location>
</feature>
<feature type="transmembrane region" description="Helical; Name=2" evidence="1">
    <location>
        <begin position="59"/>
        <end position="80"/>
    </location>
</feature>
<feature type="topological domain" description="Extracellular" evidence="1">
    <location>
        <begin position="81"/>
        <end position="101"/>
    </location>
</feature>
<feature type="transmembrane region" description="Helical; Name=3" evidence="1">
    <location>
        <begin position="102"/>
        <end position="120"/>
    </location>
</feature>
<feature type="topological domain" description="Cytoplasmic" evidence="1">
    <location>
        <begin position="121"/>
        <end position="139"/>
    </location>
</feature>
<feature type="transmembrane region" description="Helical; Name=4" evidence="1">
    <location>
        <begin position="140"/>
        <end position="158"/>
    </location>
</feature>
<feature type="topological domain" description="Extracellular" evidence="1">
    <location>
        <begin position="159"/>
        <end position="195"/>
    </location>
</feature>
<feature type="transmembrane region" description="Helical; Name=5" evidence="1">
    <location>
        <begin position="196"/>
        <end position="219"/>
    </location>
</feature>
<feature type="topological domain" description="Cytoplasmic" evidence="1">
    <location>
        <begin position="220"/>
        <end position="236"/>
    </location>
</feature>
<feature type="transmembrane region" description="Helical; Name=6" evidence="1">
    <location>
        <begin position="237"/>
        <end position="259"/>
    </location>
</feature>
<feature type="topological domain" description="Extracellular" evidence="1">
    <location>
        <begin position="260"/>
        <end position="272"/>
    </location>
</feature>
<feature type="transmembrane region" description="Helical; Name=7" evidence="1">
    <location>
        <begin position="273"/>
        <end position="292"/>
    </location>
</feature>
<feature type="topological domain" description="Cytoplasmic" evidence="1">
    <location>
        <begin position="293"/>
        <end position="323"/>
    </location>
</feature>
<feature type="glycosylation site" description="N-linked (GlcNAc...) asparagine" evidence="1">
    <location>
        <position position="9"/>
    </location>
</feature>
<feature type="disulfide bond" evidence="2">
    <location>
        <begin position="98"/>
        <end position="189"/>
    </location>
</feature>
<comment type="function">
    <text evidence="3">Odorant receptor.</text>
</comment>
<comment type="subcellular location">
    <subcellularLocation>
        <location>Cell membrane</location>
        <topology>Multi-pass membrane protein</topology>
    </subcellularLocation>
</comment>
<comment type="similarity">
    <text evidence="2">Belongs to the G-protein coupled receptor 1 family.</text>
</comment>
<comment type="online information" name="Human Olfactory Receptor Data Exploratorium (HORDE)">
    <link uri="http://genome.weizmann.ac.il/horde/card/index/symbol:OR2T35"/>
</comment>
<keyword id="KW-1003">Cell membrane</keyword>
<keyword id="KW-1015">Disulfide bond</keyword>
<keyword id="KW-0297">G-protein coupled receptor</keyword>
<keyword id="KW-0325">Glycoprotein</keyword>
<keyword id="KW-0472">Membrane</keyword>
<keyword id="KW-0552">Olfaction</keyword>
<keyword id="KW-0675">Receptor</keyword>
<keyword id="KW-1185">Reference proteome</keyword>
<keyword id="KW-0716">Sensory transduction</keyword>
<keyword id="KW-0807">Transducer</keyword>
<keyword id="KW-0812">Transmembrane</keyword>
<keyword id="KW-1133">Transmembrane helix</keyword>
<dbReference type="EMBL" id="AB065644">
    <property type="protein sequence ID" value="BAC05870.1"/>
    <property type="molecule type" value="Genomic_DNA"/>
</dbReference>
<dbReference type="EMBL" id="BK004475">
    <property type="protein sequence ID" value="DAA04873.1"/>
    <property type="molecule type" value="Genomic_DNA"/>
</dbReference>
<dbReference type="CCDS" id="CCDS31123.1"/>
<dbReference type="RefSeq" id="NP_001001827.1">
    <property type="nucleotide sequence ID" value="NM_001001827.2"/>
</dbReference>
<dbReference type="SMR" id="Q8NGX2"/>
<dbReference type="BioGRID" id="135579">
    <property type="interactions" value="3"/>
</dbReference>
<dbReference type="FunCoup" id="Q8NGX2">
    <property type="interactions" value="468"/>
</dbReference>
<dbReference type="IntAct" id="Q8NGX2">
    <property type="interactions" value="1"/>
</dbReference>
<dbReference type="STRING" id="9606.ENSP00000492995"/>
<dbReference type="GlyCosmos" id="Q8NGX2">
    <property type="glycosylation" value="1 site, No reported glycans"/>
</dbReference>
<dbReference type="GlyGen" id="Q8NGX2">
    <property type="glycosylation" value="1 site"/>
</dbReference>
<dbReference type="iPTMnet" id="Q8NGX2"/>
<dbReference type="PhosphoSitePlus" id="Q8NGX2"/>
<dbReference type="BioMuta" id="OR2T35"/>
<dbReference type="DMDM" id="38258180"/>
<dbReference type="MassIVE" id="Q8NGX2"/>
<dbReference type="PaxDb" id="9606-ENSP00000324369"/>
<dbReference type="PeptideAtlas" id="Q8NGX2"/>
<dbReference type="Antibodypedia" id="57447">
    <property type="antibodies" value="80 antibodies from 18 providers"/>
</dbReference>
<dbReference type="DNASU" id="403244"/>
<dbReference type="Ensembl" id="ENST00000641268.1">
    <property type="protein sequence ID" value="ENSP00000492995.1"/>
    <property type="gene ID" value="ENSG00000177151.5"/>
</dbReference>
<dbReference type="GeneID" id="403244"/>
<dbReference type="KEGG" id="hsa:403244"/>
<dbReference type="MANE-Select" id="ENST00000641268.1">
    <property type="protein sequence ID" value="ENSP00000492995.1"/>
    <property type="RefSeq nucleotide sequence ID" value="NM_001001827.2"/>
    <property type="RefSeq protein sequence ID" value="NP_001001827.1"/>
</dbReference>
<dbReference type="UCSC" id="uc001ies.1">
    <property type="organism name" value="human"/>
</dbReference>
<dbReference type="AGR" id="HGNC:31257"/>
<dbReference type="CTD" id="403244"/>
<dbReference type="GeneCards" id="OR2T35"/>
<dbReference type="HGNC" id="HGNC:31257">
    <property type="gene designation" value="OR2T35"/>
</dbReference>
<dbReference type="HPA" id="ENSG00000177151">
    <property type="expression patterns" value="Not detected"/>
</dbReference>
<dbReference type="neXtProt" id="NX_Q8NGX2"/>
<dbReference type="PharmGKB" id="PA134968902"/>
<dbReference type="VEuPathDB" id="HostDB:ENSG00000177151"/>
<dbReference type="eggNOG" id="ENOG502T9MD">
    <property type="taxonomic scope" value="Eukaryota"/>
</dbReference>
<dbReference type="GeneTree" id="ENSGT01130000278260"/>
<dbReference type="HOGENOM" id="CLU_012526_1_2_1"/>
<dbReference type="InParanoid" id="Q8NGX2"/>
<dbReference type="OMA" id="CEVSAIQ"/>
<dbReference type="OrthoDB" id="9247at9604"/>
<dbReference type="PAN-GO" id="Q8NGX2">
    <property type="GO annotations" value="0 GO annotations based on evolutionary models"/>
</dbReference>
<dbReference type="PhylomeDB" id="Q8NGX2"/>
<dbReference type="TreeFam" id="TF337295"/>
<dbReference type="PathwayCommons" id="Q8NGX2"/>
<dbReference type="Reactome" id="R-HSA-9752946">
    <property type="pathway name" value="Expression and translocation of olfactory receptors"/>
</dbReference>
<dbReference type="SignaLink" id="Q8NGX2"/>
<dbReference type="BioGRID-ORCS" id="403244">
    <property type="hits" value="6 hits in 636 CRISPR screens"/>
</dbReference>
<dbReference type="GenomeRNAi" id="403244"/>
<dbReference type="Pharos" id="Q8NGX2">
    <property type="development level" value="Tdark"/>
</dbReference>
<dbReference type="PRO" id="PR:Q8NGX2"/>
<dbReference type="Proteomes" id="UP000005640">
    <property type="component" value="Chromosome 1"/>
</dbReference>
<dbReference type="RNAct" id="Q8NGX2">
    <property type="molecule type" value="protein"/>
</dbReference>
<dbReference type="Bgee" id="ENSG00000177151">
    <property type="expression patterns" value="Expressed in kidney and 1 other cell type or tissue"/>
</dbReference>
<dbReference type="GO" id="GO:0005886">
    <property type="term" value="C:plasma membrane"/>
    <property type="evidence" value="ECO:0000318"/>
    <property type="project" value="GO_Central"/>
</dbReference>
<dbReference type="GO" id="GO:0004930">
    <property type="term" value="F:G protein-coupled receptor activity"/>
    <property type="evidence" value="ECO:0007669"/>
    <property type="project" value="UniProtKB-KW"/>
</dbReference>
<dbReference type="GO" id="GO:0004984">
    <property type="term" value="F:olfactory receptor activity"/>
    <property type="evidence" value="ECO:0000318"/>
    <property type="project" value="GO_Central"/>
</dbReference>
<dbReference type="GO" id="GO:0050911">
    <property type="term" value="P:detection of chemical stimulus involved in sensory perception of smell"/>
    <property type="evidence" value="ECO:0000318"/>
    <property type="project" value="GO_Central"/>
</dbReference>
<dbReference type="CDD" id="cd15421">
    <property type="entry name" value="7tmA_OR2T-like"/>
    <property type="match status" value="1"/>
</dbReference>
<dbReference type="FunFam" id="1.10.1220.70:FF:000001">
    <property type="entry name" value="Olfactory receptor"/>
    <property type="match status" value="1"/>
</dbReference>
<dbReference type="FunFam" id="1.20.1070.10:FF:000008">
    <property type="entry name" value="Olfactory receptor"/>
    <property type="match status" value="1"/>
</dbReference>
<dbReference type="Gene3D" id="1.20.1070.10">
    <property type="entry name" value="Rhodopsin 7-helix transmembrane proteins"/>
    <property type="match status" value="1"/>
</dbReference>
<dbReference type="InterPro" id="IPR000276">
    <property type="entry name" value="GPCR_Rhodpsn"/>
</dbReference>
<dbReference type="InterPro" id="IPR017452">
    <property type="entry name" value="GPCR_Rhodpsn_7TM"/>
</dbReference>
<dbReference type="InterPro" id="IPR000725">
    <property type="entry name" value="Olfact_rcpt"/>
</dbReference>
<dbReference type="PANTHER" id="PTHR26453">
    <property type="entry name" value="OLFACTORY RECEPTOR"/>
    <property type="match status" value="1"/>
</dbReference>
<dbReference type="Pfam" id="PF13853">
    <property type="entry name" value="7tm_4"/>
    <property type="match status" value="1"/>
</dbReference>
<dbReference type="PRINTS" id="PR00237">
    <property type="entry name" value="GPCRRHODOPSN"/>
</dbReference>
<dbReference type="PRINTS" id="PR00245">
    <property type="entry name" value="OLFACTORYR"/>
</dbReference>
<dbReference type="SUPFAM" id="SSF81321">
    <property type="entry name" value="Family A G protein-coupled receptor-like"/>
    <property type="match status" value="1"/>
</dbReference>
<dbReference type="PROSITE" id="PS00237">
    <property type="entry name" value="G_PROTEIN_RECEP_F1_1"/>
    <property type="match status" value="1"/>
</dbReference>
<dbReference type="PROSITE" id="PS50262">
    <property type="entry name" value="G_PROTEIN_RECEP_F1_2"/>
    <property type="match status" value="1"/>
</dbReference>
<reference key="1">
    <citation type="submission" date="2001-07" db="EMBL/GenBank/DDBJ databases">
        <title>Genome-wide discovery and analysis of human seven transmembrane helix receptor genes.</title>
        <authorList>
            <person name="Suwa M."/>
            <person name="Sato T."/>
            <person name="Okouchi I."/>
            <person name="Arita M."/>
            <person name="Futami K."/>
            <person name="Matsumoto S."/>
            <person name="Tsutsumi S."/>
            <person name="Aburatani H."/>
            <person name="Asai K."/>
            <person name="Akiyama Y."/>
        </authorList>
    </citation>
    <scope>NUCLEOTIDE SEQUENCE [GENOMIC DNA]</scope>
</reference>
<reference key="2">
    <citation type="journal article" date="2004" name="Proc. Natl. Acad. Sci. U.S.A.">
        <title>The human olfactory receptor gene family.</title>
        <authorList>
            <person name="Malnic B."/>
            <person name="Godfrey P.A."/>
            <person name="Buck L.B."/>
        </authorList>
    </citation>
    <scope>IDENTIFICATION</scope>
</reference>
<reference key="3">
    <citation type="journal article" date="2004" name="Proc. Natl. Acad. Sci. U.S.A.">
        <authorList>
            <person name="Malnic B."/>
            <person name="Godfrey P.A."/>
            <person name="Buck L.B."/>
        </authorList>
    </citation>
    <scope>ERRATUM OF PUBMED:14983052</scope>
</reference>
<sequence length="323" mass="36101">MGMEGLLQNSTNFVLTGLITHPAFPGLLFAVVFSIFVVAITANLVMILLIHMDSRLHTPMYFLLSQLSIMDTIYICITVPKMLQDLLSKDKTISFLGCAVQIFYLTLIGGEFFLLGLMAYDRYVAVCNPLRYPLLMNRRVCLFMVVGSWVGGSLDGFMLTPVTMSFPFCRSREINHFFCEIPAVLKLSCTDTSLYETLMYACCVLMLLIPLSVISVSYTHILLTVHRMNSAEGRRKAFATCSSHIMVVSVFYGAAFYTNVLPHSYHTPEKDKVVSAFYTILTPMLNPLIYSLRNKDVAAALRKVLGRCGSSQSIRVATVIRKG</sequence>
<name>O2T35_HUMAN</name>